<accession>A3DE09</accession>
<reference key="1">
    <citation type="submission" date="2007-02" db="EMBL/GenBank/DDBJ databases">
        <title>Complete sequence of Clostridium thermocellum ATCC 27405.</title>
        <authorList>
            <consortium name="US DOE Joint Genome Institute"/>
            <person name="Copeland A."/>
            <person name="Lucas S."/>
            <person name="Lapidus A."/>
            <person name="Barry K."/>
            <person name="Detter J.C."/>
            <person name="Glavina del Rio T."/>
            <person name="Hammon N."/>
            <person name="Israni S."/>
            <person name="Dalin E."/>
            <person name="Tice H."/>
            <person name="Pitluck S."/>
            <person name="Chertkov O."/>
            <person name="Brettin T."/>
            <person name="Bruce D."/>
            <person name="Han C."/>
            <person name="Tapia R."/>
            <person name="Gilna P."/>
            <person name="Schmutz J."/>
            <person name="Larimer F."/>
            <person name="Land M."/>
            <person name="Hauser L."/>
            <person name="Kyrpides N."/>
            <person name="Mikhailova N."/>
            <person name="Wu J.H.D."/>
            <person name="Newcomb M."/>
            <person name="Richardson P."/>
        </authorList>
    </citation>
    <scope>NUCLEOTIDE SEQUENCE [LARGE SCALE GENOMIC DNA]</scope>
    <source>
        <strain>ATCC 27405 / DSM 1237 / JCM 9322 / NBRC 103400 / NCIMB 10682 / NRRL B-4536 / VPI 7372</strain>
    </source>
</reference>
<proteinExistence type="inferred from homology"/>
<comment type="function">
    <text evidence="1">Regulates transcriptional attenuation of the pyrimidine nucleotide (pyr) operon by binding in a uridine-dependent manner to specific sites on pyr mRNA. This disrupts an antiterminator hairpin in the RNA and favors formation of a downstream transcription terminator, leading to a reduced expression of downstream genes.</text>
</comment>
<comment type="function">
    <text evidence="1">Also displays a weak uracil phosphoribosyltransferase activity which is not physiologically significant.</text>
</comment>
<comment type="catalytic activity">
    <reaction evidence="1">
        <text>UMP + diphosphate = 5-phospho-alpha-D-ribose 1-diphosphate + uracil</text>
        <dbReference type="Rhea" id="RHEA:13017"/>
        <dbReference type="ChEBI" id="CHEBI:17568"/>
        <dbReference type="ChEBI" id="CHEBI:33019"/>
        <dbReference type="ChEBI" id="CHEBI:57865"/>
        <dbReference type="ChEBI" id="CHEBI:58017"/>
        <dbReference type="EC" id="2.4.2.9"/>
    </reaction>
</comment>
<comment type="subunit">
    <text evidence="1">Homodimer and homohexamer; in equilibrium.</text>
</comment>
<comment type="similarity">
    <text evidence="1">Belongs to the purine/pyrimidine phosphoribosyltransferase family. PyrR subfamily.</text>
</comment>
<protein>
    <recommendedName>
        <fullName evidence="1">Bifunctional protein PyrR</fullName>
    </recommendedName>
    <domain>
        <recommendedName>
            <fullName evidence="1">Pyrimidine operon regulatory protein</fullName>
        </recommendedName>
    </domain>
    <domain>
        <recommendedName>
            <fullName evidence="1">Uracil phosphoribosyltransferase</fullName>
            <shortName evidence="1">UPRTase</shortName>
            <ecNumber evidence="1">2.4.2.9</ecNumber>
        </recommendedName>
    </domain>
</protein>
<evidence type="ECO:0000255" key="1">
    <source>
        <dbReference type="HAMAP-Rule" id="MF_01219"/>
    </source>
</evidence>
<organism>
    <name type="scientific">Acetivibrio thermocellus (strain ATCC 27405 / DSM 1237 / JCM 9322 / NBRC 103400 / NCIMB 10682 / NRRL B-4536 / VPI 7372)</name>
    <name type="common">Clostridium thermocellum</name>
    <dbReference type="NCBI Taxonomy" id="203119"/>
    <lineage>
        <taxon>Bacteria</taxon>
        <taxon>Bacillati</taxon>
        <taxon>Bacillota</taxon>
        <taxon>Clostridia</taxon>
        <taxon>Eubacteriales</taxon>
        <taxon>Oscillospiraceae</taxon>
        <taxon>Acetivibrio</taxon>
    </lineage>
</organism>
<gene>
    <name evidence="1" type="primary">pyrR</name>
    <name type="ordered locus">Cthe_0954</name>
</gene>
<dbReference type="EC" id="2.4.2.9" evidence="1"/>
<dbReference type="EMBL" id="CP000568">
    <property type="protein sequence ID" value="ABN52188.1"/>
    <property type="molecule type" value="Genomic_DNA"/>
</dbReference>
<dbReference type="RefSeq" id="WP_003518642.1">
    <property type="nucleotide sequence ID" value="NC_009012.1"/>
</dbReference>
<dbReference type="SMR" id="A3DE09"/>
<dbReference type="STRING" id="203119.Cthe_0954"/>
<dbReference type="GeneID" id="35804520"/>
<dbReference type="KEGG" id="cth:Cthe_0954"/>
<dbReference type="eggNOG" id="COG2065">
    <property type="taxonomic scope" value="Bacteria"/>
</dbReference>
<dbReference type="HOGENOM" id="CLU_094234_2_1_9"/>
<dbReference type="OrthoDB" id="9802227at2"/>
<dbReference type="Proteomes" id="UP000002145">
    <property type="component" value="Chromosome"/>
</dbReference>
<dbReference type="GO" id="GO:0003723">
    <property type="term" value="F:RNA binding"/>
    <property type="evidence" value="ECO:0007669"/>
    <property type="project" value="UniProtKB-UniRule"/>
</dbReference>
<dbReference type="GO" id="GO:0004845">
    <property type="term" value="F:uracil phosphoribosyltransferase activity"/>
    <property type="evidence" value="ECO:0007669"/>
    <property type="project" value="UniProtKB-UniRule"/>
</dbReference>
<dbReference type="GO" id="GO:0006353">
    <property type="term" value="P:DNA-templated transcription termination"/>
    <property type="evidence" value="ECO:0007669"/>
    <property type="project" value="UniProtKB-UniRule"/>
</dbReference>
<dbReference type="CDD" id="cd06223">
    <property type="entry name" value="PRTases_typeI"/>
    <property type="match status" value="1"/>
</dbReference>
<dbReference type="FunFam" id="3.40.50.2020:FF:000020">
    <property type="entry name" value="Bifunctional protein PyrR"/>
    <property type="match status" value="1"/>
</dbReference>
<dbReference type="Gene3D" id="3.40.50.2020">
    <property type="match status" value="1"/>
</dbReference>
<dbReference type="HAMAP" id="MF_01219">
    <property type="entry name" value="PyrR"/>
    <property type="match status" value="1"/>
</dbReference>
<dbReference type="InterPro" id="IPR000836">
    <property type="entry name" value="PRibTrfase_dom"/>
</dbReference>
<dbReference type="InterPro" id="IPR029057">
    <property type="entry name" value="PRTase-like"/>
</dbReference>
<dbReference type="InterPro" id="IPR023050">
    <property type="entry name" value="PyrR"/>
</dbReference>
<dbReference type="InterPro" id="IPR050137">
    <property type="entry name" value="PyrR_bifunctional"/>
</dbReference>
<dbReference type="NCBIfam" id="NF003547">
    <property type="entry name" value="PRK05205.1-3"/>
    <property type="match status" value="1"/>
</dbReference>
<dbReference type="NCBIfam" id="NF003548">
    <property type="entry name" value="PRK05205.1-4"/>
    <property type="match status" value="1"/>
</dbReference>
<dbReference type="NCBIfam" id="NF003549">
    <property type="entry name" value="PRK05205.1-5"/>
    <property type="match status" value="1"/>
</dbReference>
<dbReference type="PANTHER" id="PTHR11608">
    <property type="entry name" value="BIFUNCTIONAL PROTEIN PYRR"/>
    <property type="match status" value="1"/>
</dbReference>
<dbReference type="PANTHER" id="PTHR11608:SF0">
    <property type="entry name" value="BIFUNCTIONAL PROTEIN PYRR"/>
    <property type="match status" value="1"/>
</dbReference>
<dbReference type="Pfam" id="PF00156">
    <property type="entry name" value="Pribosyltran"/>
    <property type="match status" value="1"/>
</dbReference>
<dbReference type="SUPFAM" id="SSF53271">
    <property type="entry name" value="PRTase-like"/>
    <property type="match status" value="1"/>
</dbReference>
<keyword id="KW-0328">Glycosyltransferase</keyword>
<keyword id="KW-1185">Reference proteome</keyword>
<keyword id="KW-0694">RNA-binding</keyword>
<keyword id="KW-0804">Transcription</keyword>
<keyword id="KW-0805">Transcription regulation</keyword>
<keyword id="KW-0806">Transcription termination</keyword>
<keyword id="KW-0808">Transferase</keyword>
<sequence>MIDKAEIMDESAIMRAITRIAHEIIEKNKGVDNLALIGIQRRGVPLAKMIAEKIKGVEGKSVPVGILDITLYRDDLSMLSEHPIINGTQIDFPITDKKIVLVDDVLYTGRTVRAAIDALMDAGRPKMVQLAVLIDRGHRELPIRPDYVGKNVPTSRLEVVNVKLYEIDGVNCVTISDIEKGVRH</sequence>
<feature type="chain" id="PRO_1000053831" description="Bifunctional protein PyrR">
    <location>
        <begin position="1"/>
        <end position="184"/>
    </location>
</feature>
<feature type="short sequence motif" description="PRPP-binding" evidence="1">
    <location>
        <begin position="99"/>
        <end position="111"/>
    </location>
</feature>
<name>PYRR_ACET2</name>